<name>YIDD_CHLMU</name>
<feature type="chain" id="PRO_0000171809" description="Putative membrane protein insertion efficiency factor">
    <location>
        <begin position="1"/>
        <end position="97"/>
    </location>
</feature>
<dbReference type="EMBL" id="AE002160">
    <property type="protein sequence ID" value="AAF39562.1"/>
    <property type="molecule type" value="Genomic_DNA"/>
</dbReference>
<dbReference type="PIR" id="B81668">
    <property type="entry name" value="B81668"/>
</dbReference>
<dbReference type="GeneID" id="1246123"/>
<dbReference type="KEGG" id="cmu:TC_0758"/>
<dbReference type="eggNOG" id="COG0759">
    <property type="taxonomic scope" value="Bacteria"/>
</dbReference>
<dbReference type="HOGENOM" id="CLU_144811_2_1_0"/>
<dbReference type="OrthoDB" id="9801753at2"/>
<dbReference type="Proteomes" id="UP000000800">
    <property type="component" value="Chromosome"/>
</dbReference>
<dbReference type="GO" id="GO:0005886">
    <property type="term" value="C:plasma membrane"/>
    <property type="evidence" value="ECO:0007669"/>
    <property type="project" value="UniProtKB-SubCell"/>
</dbReference>
<dbReference type="HAMAP" id="MF_00386">
    <property type="entry name" value="UPF0161_YidD"/>
    <property type="match status" value="1"/>
</dbReference>
<dbReference type="InterPro" id="IPR002696">
    <property type="entry name" value="Membr_insert_effic_factor_YidD"/>
</dbReference>
<dbReference type="NCBIfam" id="TIGR00278">
    <property type="entry name" value="membrane protein insertion efficiency factor YidD"/>
    <property type="match status" value="1"/>
</dbReference>
<dbReference type="PANTHER" id="PTHR33383">
    <property type="entry name" value="MEMBRANE PROTEIN INSERTION EFFICIENCY FACTOR-RELATED"/>
    <property type="match status" value="1"/>
</dbReference>
<dbReference type="PANTHER" id="PTHR33383:SF1">
    <property type="entry name" value="MEMBRANE PROTEIN INSERTION EFFICIENCY FACTOR-RELATED"/>
    <property type="match status" value="1"/>
</dbReference>
<dbReference type="Pfam" id="PF01809">
    <property type="entry name" value="YidD"/>
    <property type="match status" value="1"/>
</dbReference>
<dbReference type="SMART" id="SM01234">
    <property type="entry name" value="Haemolytic"/>
    <property type="match status" value="1"/>
</dbReference>
<accession>Q9PJS0</accession>
<protein>
    <recommendedName>
        <fullName evidence="1">Putative membrane protein insertion efficiency factor</fullName>
    </recommendedName>
</protein>
<evidence type="ECO:0000255" key="1">
    <source>
        <dbReference type="HAMAP-Rule" id="MF_00386"/>
    </source>
</evidence>
<organism>
    <name type="scientific">Chlamydia muridarum (strain MoPn / Nigg)</name>
    <dbReference type="NCBI Taxonomy" id="243161"/>
    <lineage>
        <taxon>Bacteria</taxon>
        <taxon>Pseudomonadati</taxon>
        <taxon>Chlamydiota</taxon>
        <taxon>Chlamydiia</taxon>
        <taxon>Chlamydiales</taxon>
        <taxon>Chlamydiaceae</taxon>
        <taxon>Chlamydia/Chlamydophila group</taxon>
        <taxon>Chlamydia</taxon>
    </lineage>
</organism>
<keyword id="KW-0997">Cell inner membrane</keyword>
<keyword id="KW-1003">Cell membrane</keyword>
<keyword id="KW-0472">Membrane</keyword>
<reference key="1">
    <citation type="journal article" date="2000" name="Nucleic Acids Res.">
        <title>Genome sequences of Chlamydia trachomatis MoPn and Chlamydia pneumoniae AR39.</title>
        <authorList>
            <person name="Read T.D."/>
            <person name="Brunham R.C."/>
            <person name="Shen C."/>
            <person name="Gill S.R."/>
            <person name="Heidelberg J.F."/>
            <person name="White O."/>
            <person name="Hickey E.K."/>
            <person name="Peterson J.D."/>
            <person name="Utterback T.R."/>
            <person name="Berry K.J."/>
            <person name="Bass S."/>
            <person name="Linher K.D."/>
            <person name="Weidman J.F."/>
            <person name="Khouri H.M."/>
            <person name="Craven B."/>
            <person name="Bowman C."/>
            <person name="Dodson R.J."/>
            <person name="Gwinn M.L."/>
            <person name="Nelson W.C."/>
            <person name="DeBoy R.T."/>
            <person name="Kolonay J.F."/>
            <person name="McClarty G."/>
            <person name="Salzberg S.L."/>
            <person name="Eisen J.A."/>
            <person name="Fraser C.M."/>
        </authorList>
    </citation>
    <scope>NUCLEOTIDE SEQUENCE [LARGE SCALE GENOMIC DNA]</scope>
    <source>
        <strain>MoPn / Nigg</strain>
    </source>
</reference>
<gene>
    <name type="ordered locus">TC_0758</name>
</gene>
<proteinExistence type="inferred from homology"/>
<sequence>MKTSWIKIFFQGMIHLYRWTISPLLGSPCRFFPSCSEYALVALKKHPLKRSLFLIANRLLKCGPWHIGGIDLVPGTSIEEYLESPDDKNVPPDQETV</sequence>
<comment type="function">
    <text evidence="1">Could be involved in insertion of integral membrane proteins into the membrane.</text>
</comment>
<comment type="subcellular location">
    <subcellularLocation>
        <location evidence="1">Cell inner membrane</location>
        <topology evidence="1">Peripheral membrane protein</topology>
        <orientation evidence="1">Cytoplasmic side</orientation>
    </subcellularLocation>
</comment>
<comment type="similarity">
    <text evidence="1">Belongs to the UPF0161 family.</text>
</comment>